<keyword id="KW-0175">Coiled coil</keyword>
<keyword id="KW-0256">Endoplasmic reticulum</keyword>
<keyword id="KW-0342">GTP-binding</keyword>
<keyword id="KW-0378">Hydrolase</keyword>
<keyword id="KW-0472">Membrane</keyword>
<keyword id="KW-0547">Nucleotide-binding</keyword>
<keyword id="KW-1185">Reference proteome</keyword>
<keyword id="KW-0812">Transmembrane</keyword>
<keyword id="KW-1133">Transmembrane helix</keyword>
<dbReference type="EC" id="3.6.5.-" evidence="1"/>
<dbReference type="EMBL" id="GG663366">
    <property type="protein sequence ID" value="EEH07898.1"/>
    <property type="molecule type" value="Genomic_DNA"/>
</dbReference>
<dbReference type="SMR" id="C0NJ57"/>
<dbReference type="FunCoup" id="C0NJ57">
    <property type="interactions" value="61"/>
</dbReference>
<dbReference type="STRING" id="447093.C0NJ57"/>
<dbReference type="VEuPathDB" id="FungiDB:I7I50_06737"/>
<dbReference type="HOGENOM" id="CLU_011270_0_0_1"/>
<dbReference type="InParanoid" id="C0NJ57"/>
<dbReference type="Proteomes" id="UP000001631">
    <property type="component" value="Unassembled WGS sequence"/>
</dbReference>
<dbReference type="GO" id="GO:0005789">
    <property type="term" value="C:endoplasmic reticulum membrane"/>
    <property type="evidence" value="ECO:0007669"/>
    <property type="project" value="UniProtKB-SubCell"/>
</dbReference>
<dbReference type="GO" id="GO:0005525">
    <property type="term" value="F:GTP binding"/>
    <property type="evidence" value="ECO:0007669"/>
    <property type="project" value="UniProtKB-UniRule"/>
</dbReference>
<dbReference type="GO" id="GO:0003924">
    <property type="term" value="F:GTPase activity"/>
    <property type="evidence" value="ECO:0007669"/>
    <property type="project" value="UniProtKB-UniRule"/>
</dbReference>
<dbReference type="GO" id="GO:0016320">
    <property type="term" value="P:endoplasmic reticulum membrane fusion"/>
    <property type="evidence" value="ECO:0007669"/>
    <property type="project" value="TreeGrafter"/>
</dbReference>
<dbReference type="CDD" id="cd01851">
    <property type="entry name" value="GBP"/>
    <property type="match status" value="1"/>
</dbReference>
<dbReference type="FunFam" id="3.40.50.300:FF:000727">
    <property type="entry name" value="Protein SEY1 homolog"/>
    <property type="match status" value="1"/>
</dbReference>
<dbReference type="Gene3D" id="3.40.50.300">
    <property type="entry name" value="P-loop containing nucleotide triphosphate hydrolases"/>
    <property type="match status" value="1"/>
</dbReference>
<dbReference type="HAMAP" id="MF_03109">
    <property type="entry name" value="Sey1"/>
    <property type="match status" value="1"/>
</dbReference>
<dbReference type="InterPro" id="IPR030386">
    <property type="entry name" value="G_GB1_RHD3_dom"/>
</dbReference>
<dbReference type="InterPro" id="IPR027417">
    <property type="entry name" value="P-loop_NTPase"/>
</dbReference>
<dbReference type="InterPro" id="IPR008803">
    <property type="entry name" value="RHD3/Sey1"/>
</dbReference>
<dbReference type="InterPro" id="IPR046758">
    <property type="entry name" value="Sey1/RHD3-like_3HB"/>
</dbReference>
<dbReference type="PANTHER" id="PTHR45923">
    <property type="entry name" value="PROTEIN SEY1"/>
    <property type="match status" value="1"/>
</dbReference>
<dbReference type="PANTHER" id="PTHR45923:SF2">
    <property type="entry name" value="PROTEIN SEY1"/>
    <property type="match status" value="1"/>
</dbReference>
<dbReference type="Pfam" id="PF05879">
    <property type="entry name" value="RHD3_GTPase"/>
    <property type="match status" value="1"/>
</dbReference>
<dbReference type="Pfam" id="PF20428">
    <property type="entry name" value="Sey1_3HB"/>
    <property type="match status" value="1"/>
</dbReference>
<dbReference type="SUPFAM" id="SSF52540">
    <property type="entry name" value="P-loop containing nucleoside triphosphate hydrolases"/>
    <property type="match status" value="1"/>
</dbReference>
<dbReference type="PROSITE" id="PS51715">
    <property type="entry name" value="G_GB1_RHD3"/>
    <property type="match status" value="1"/>
</dbReference>
<evidence type="ECO:0000255" key="1">
    <source>
        <dbReference type="HAMAP-Rule" id="MF_03109"/>
    </source>
</evidence>
<evidence type="ECO:0000255" key="2">
    <source>
        <dbReference type="PROSITE-ProRule" id="PRU01052"/>
    </source>
</evidence>
<evidence type="ECO:0000256" key="3">
    <source>
        <dbReference type="SAM" id="MobiDB-lite"/>
    </source>
</evidence>
<feature type="chain" id="PRO_0000384965" description="Protein SEY1">
    <location>
        <begin position="1"/>
        <end position="873"/>
    </location>
</feature>
<feature type="topological domain" description="Cytoplasmic" evidence="1">
    <location>
        <begin position="1"/>
        <end position="749"/>
    </location>
</feature>
<feature type="transmembrane region" description="Helical" evidence="1">
    <location>
        <begin position="750"/>
        <end position="770"/>
    </location>
</feature>
<feature type="topological domain" description="Lumenal" evidence="1">
    <location>
        <begin position="771"/>
        <end position="773"/>
    </location>
</feature>
<feature type="transmembrane region" description="Helical" evidence="1">
    <location>
        <begin position="774"/>
        <end position="794"/>
    </location>
</feature>
<feature type="topological domain" description="Cytoplasmic" evidence="1">
    <location>
        <begin position="795"/>
        <end position="873"/>
    </location>
</feature>
<feature type="domain" description="GB1/RHD3-type G" evidence="2">
    <location>
        <begin position="49"/>
        <end position="307"/>
    </location>
</feature>
<feature type="region of interest" description="Disordered" evidence="3">
    <location>
        <begin position="1"/>
        <end position="21"/>
    </location>
</feature>
<feature type="region of interest" description="Disordered" evidence="3">
    <location>
        <begin position="676"/>
        <end position="703"/>
    </location>
</feature>
<feature type="region of interest" description="Disordered" evidence="3">
    <location>
        <begin position="828"/>
        <end position="873"/>
    </location>
</feature>
<feature type="coiled-coil region" evidence="1">
    <location>
        <begin position="482"/>
        <end position="506"/>
    </location>
</feature>
<feature type="compositionally biased region" description="Acidic residues" evidence="3">
    <location>
        <begin position="690"/>
        <end position="703"/>
    </location>
</feature>
<feature type="compositionally biased region" description="Basic and acidic residues" evidence="3">
    <location>
        <begin position="839"/>
        <end position="863"/>
    </location>
</feature>
<feature type="compositionally biased region" description="Acidic residues" evidence="3">
    <location>
        <begin position="864"/>
        <end position="873"/>
    </location>
</feature>
<feature type="binding site" evidence="1">
    <location>
        <begin position="59"/>
        <end position="66"/>
    </location>
    <ligand>
        <name>GTP</name>
        <dbReference type="ChEBI" id="CHEBI:37565"/>
    </ligand>
</feature>
<sequence>MVANGHFAGSADGQDSSSYEHGVQVIDEDKEFNPNVSKYLTYENVTPAGFNYHLISVFGSQSTGKSTLLNNLFGTHFSVMSETERRQTTKGIWLSKNKRLELRKDRDPQAKMADNILVMDVEGTDGRERGEDQDFERKSALFALATSEVLIVNIWEHQVGLYQGANMGLLKTVFEVNLELFLKDNKSTPRSLLFFVIRDFLGTTPLQNLQNTLLQDLNRIWSSLSKPAGLENSTINDYFDFAFAGLPHKNFQPDKFMDEVQKLSTRFCEGHRDPSSLDRKGTGSIEGGIFLPEYHRRIPADGFAVYAEGVWDQIVNNKDLDLPTQQELLAQFRCDEISREALVAFDEAISPFESKQAEAVQAGTPEVLGGLGPAMRNARMKAVKNFDTEACRYHKRVYQMKKTELQDKIDTRLKALFLGQLNAAHRSGVQEFSESVSAAVKAGQKKGASYDFAEIVRRQRKLAIEKFEKEARSTLVEDAPWSNYQQELSLYQKDLERTSGQLRRDEMRRLATRVERWVRSRLGESVDLEFNALGSGRGGSGAPEFGDKPSEKTIWDRVWTLFVDTVLDAERRFTERASSFDAGLDEVDVGLWRLRRKSWGVLRAKIDEEMMEGNLLLKLRENFEDKFRYDDAGVPRIWRPTDDIESVYSQARESTLTLIPLLARFKLAETNAPPPLDKWIGHTPSSATPADEEDLTPIGGVDDDEGKSLEEEMTLIGEAKKQDLTVRFKKTADGVYVEAKRSAIGGITQVPLYFYGLLFALGWNEILAVLRNPVYFLLLFVCAIGAYITYQLNLWGPIIKMTEAASHQAVEEGKRRLREFLEASDTGRQAMAMSGARNATEEHEMSRLSRKPAERGGRKNRADEDVDDDDDDF</sequence>
<name>SEY1_AJECG</name>
<comment type="function">
    <text evidence="1">Cooperates with the reticulon proteins and tubule-shaping DP1 family proteins to generate and maintain the structure of the tubular endoplasmic reticulum network. Has GTPase activity, which is required for its function in ER organization.</text>
</comment>
<comment type="subcellular location">
    <subcellularLocation>
        <location evidence="1">Endoplasmic reticulum membrane</location>
        <topology evidence="1">Multi-pass membrane protein</topology>
    </subcellularLocation>
    <text evidence="1">Enriched in the cortical ER. Concentrated in punctae along the ER tubules.</text>
</comment>
<comment type="similarity">
    <text evidence="2">Belongs to the TRAFAC class dynamin-like GTPase superfamily. GB1/RHD3 GTPase family. RHD3 subfamily.</text>
</comment>
<proteinExistence type="inferred from homology"/>
<reference key="1">
    <citation type="submission" date="2009-02" db="EMBL/GenBank/DDBJ databases">
        <title>The genome sequence of Ajellomyces capsulatus strain G186AR.</title>
        <authorList>
            <person name="Champion M."/>
            <person name="Cuomo C.A."/>
            <person name="Ma L.-J."/>
            <person name="Henn M.R."/>
            <person name="Sil A."/>
            <person name="Goldman B."/>
            <person name="Young S.K."/>
            <person name="Kodira C.D."/>
            <person name="Zeng Q."/>
            <person name="Koehrsen M."/>
            <person name="Alvarado L."/>
            <person name="Berlin A."/>
            <person name="Borenstein D."/>
            <person name="Chen Z."/>
            <person name="Engels R."/>
            <person name="Freedman E."/>
            <person name="Gellesch M."/>
            <person name="Goldberg J."/>
            <person name="Griggs A."/>
            <person name="Gujja S."/>
            <person name="Heiman D."/>
            <person name="Hepburn T."/>
            <person name="Howarth C."/>
            <person name="Jen D."/>
            <person name="Larson L."/>
            <person name="Lewis B."/>
            <person name="Mehta T."/>
            <person name="Park D."/>
            <person name="Pearson M."/>
            <person name="Roberts A."/>
            <person name="Saif S."/>
            <person name="Shea T."/>
            <person name="Shenoy N."/>
            <person name="Sisk P."/>
            <person name="Stolte C."/>
            <person name="Sykes S."/>
            <person name="Walk T."/>
            <person name="White J."/>
            <person name="Yandava C."/>
            <person name="Klein B."/>
            <person name="McEwen J.G."/>
            <person name="Puccia R."/>
            <person name="Goldman G.H."/>
            <person name="Felipe M.S."/>
            <person name="Nino-Vega G."/>
            <person name="San-Blas G."/>
            <person name="Taylor J."/>
            <person name="Mendoza L."/>
            <person name="Galagan J.E."/>
            <person name="Nusbaum C."/>
            <person name="Birren B.W."/>
        </authorList>
    </citation>
    <scope>NUCLEOTIDE SEQUENCE [LARGE SCALE GENOMIC DNA]</scope>
    <source>
        <strain>G186AR / H82 / ATCC MYA-2454 / RMSCC 2432</strain>
    </source>
</reference>
<gene>
    <name evidence="1" type="primary">SEY1</name>
    <name type="ORF">HCBG_03187</name>
</gene>
<accession>C0NJ57</accession>
<organism>
    <name type="scientific">Ajellomyces capsulatus (strain G186AR / H82 / ATCC MYA-2454 / RMSCC 2432)</name>
    <name type="common">Darling's disease fungus</name>
    <name type="synonym">Histoplasma capsulatum</name>
    <dbReference type="NCBI Taxonomy" id="447093"/>
    <lineage>
        <taxon>Eukaryota</taxon>
        <taxon>Fungi</taxon>
        <taxon>Dikarya</taxon>
        <taxon>Ascomycota</taxon>
        <taxon>Pezizomycotina</taxon>
        <taxon>Eurotiomycetes</taxon>
        <taxon>Eurotiomycetidae</taxon>
        <taxon>Onygenales</taxon>
        <taxon>Ajellomycetaceae</taxon>
        <taxon>Histoplasma</taxon>
    </lineage>
</organism>
<protein>
    <recommendedName>
        <fullName evidence="1">Protein SEY1</fullName>
        <ecNumber evidence="1">3.6.5.-</ecNumber>
    </recommendedName>
</protein>